<protein>
    <recommendedName>
        <fullName evidence="1">Small ribosomal subunit protein uS9</fullName>
    </recommendedName>
    <alternativeName>
        <fullName>40S ribosomal protein S16</fullName>
    </alternativeName>
</protein>
<dbReference type="EMBL" id="AY552053">
    <property type="protein sequence ID" value="AAS79339.1"/>
    <property type="molecule type" value="mRNA"/>
</dbReference>
<dbReference type="EMBL" id="CH477271">
    <property type="protein sequence ID" value="EAT45313.1"/>
    <property type="molecule type" value="Genomic_DNA"/>
</dbReference>
<dbReference type="SMR" id="P62251"/>
<dbReference type="FunCoup" id="P62251">
    <property type="interactions" value="839"/>
</dbReference>
<dbReference type="STRING" id="7159.P62251"/>
<dbReference type="PaxDb" id="7159-AAEL003427-PA"/>
<dbReference type="EnsemblMetazoa" id="AAEL003427-RA">
    <property type="protein sequence ID" value="AAEL003427-PA"/>
    <property type="gene ID" value="AAEL003427"/>
</dbReference>
<dbReference type="GeneID" id="5578123"/>
<dbReference type="KEGG" id="aag:5578123"/>
<dbReference type="CTD" id="6217"/>
<dbReference type="VEuPathDB" id="VectorBase:AAEL003427"/>
<dbReference type="eggNOG" id="KOG1753">
    <property type="taxonomic scope" value="Eukaryota"/>
</dbReference>
<dbReference type="HOGENOM" id="CLU_046483_4_0_1"/>
<dbReference type="InParanoid" id="P62251"/>
<dbReference type="OMA" id="WPIEMAR"/>
<dbReference type="OrthoDB" id="426865at2759"/>
<dbReference type="PhylomeDB" id="P62251"/>
<dbReference type="Proteomes" id="UP000008820">
    <property type="component" value="Chromosome 3"/>
</dbReference>
<dbReference type="Proteomes" id="UP000682892">
    <property type="component" value="Chromosome 3"/>
</dbReference>
<dbReference type="GO" id="GO:0022627">
    <property type="term" value="C:cytosolic small ribosomal subunit"/>
    <property type="evidence" value="ECO:0007669"/>
    <property type="project" value="TreeGrafter"/>
</dbReference>
<dbReference type="GO" id="GO:0003723">
    <property type="term" value="F:RNA binding"/>
    <property type="evidence" value="ECO:0007669"/>
    <property type="project" value="TreeGrafter"/>
</dbReference>
<dbReference type="GO" id="GO:0003735">
    <property type="term" value="F:structural constituent of ribosome"/>
    <property type="evidence" value="ECO:0007669"/>
    <property type="project" value="InterPro"/>
</dbReference>
<dbReference type="GO" id="GO:0000462">
    <property type="term" value="P:maturation of SSU-rRNA from tricistronic rRNA transcript (SSU-rRNA, 5.8S rRNA, LSU-rRNA)"/>
    <property type="evidence" value="ECO:0007669"/>
    <property type="project" value="TreeGrafter"/>
</dbReference>
<dbReference type="GO" id="GO:0006412">
    <property type="term" value="P:translation"/>
    <property type="evidence" value="ECO:0007669"/>
    <property type="project" value="InterPro"/>
</dbReference>
<dbReference type="FunFam" id="3.30.230.10:FF:000184">
    <property type="entry name" value="40S ribosomal protein S16"/>
    <property type="match status" value="1"/>
</dbReference>
<dbReference type="Gene3D" id="3.30.230.10">
    <property type="match status" value="1"/>
</dbReference>
<dbReference type="InterPro" id="IPR020568">
    <property type="entry name" value="Ribosomal_Su5_D2-typ_SF"/>
</dbReference>
<dbReference type="InterPro" id="IPR000754">
    <property type="entry name" value="Ribosomal_uS9"/>
</dbReference>
<dbReference type="InterPro" id="IPR020574">
    <property type="entry name" value="Ribosomal_uS9_CS"/>
</dbReference>
<dbReference type="InterPro" id="IPR014721">
    <property type="entry name" value="Ribsml_uS5_D2-typ_fold_subgr"/>
</dbReference>
<dbReference type="NCBIfam" id="NF001749">
    <property type="entry name" value="PRK00474.1"/>
    <property type="match status" value="1"/>
</dbReference>
<dbReference type="PANTHER" id="PTHR21569:SF16">
    <property type="entry name" value="RIBOSOMAL PROTEIN S16"/>
    <property type="match status" value="1"/>
</dbReference>
<dbReference type="PANTHER" id="PTHR21569">
    <property type="entry name" value="RIBOSOMAL PROTEIN S9"/>
    <property type="match status" value="1"/>
</dbReference>
<dbReference type="Pfam" id="PF00380">
    <property type="entry name" value="Ribosomal_S9"/>
    <property type="match status" value="1"/>
</dbReference>
<dbReference type="SUPFAM" id="SSF54211">
    <property type="entry name" value="Ribosomal protein S5 domain 2-like"/>
    <property type="match status" value="1"/>
</dbReference>
<dbReference type="PROSITE" id="PS00360">
    <property type="entry name" value="RIBOSOMAL_S9"/>
    <property type="match status" value="1"/>
</dbReference>
<organism>
    <name type="scientific">Aedes aegypti</name>
    <name type="common">Yellowfever mosquito</name>
    <name type="synonym">Culex aegypti</name>
    <dbReference type="NCBI Taxonomy" id="7159"/>
    <lineage>
        <taxon>Eukaryota</taxon>
        <taxon>Metazoa</taxon>
        <taxon>Ecdysozoa</taxon>
        <taxon>Arthropoda</taxon>
        <taxon>Hexapoda</taxon>
        <taxon>Insecta</taxon>
        <taxon>Pterygota</taxon>
        <taxon>Neoptera</taxon>
        <taxon>Endopterygota</taxon>
        <taxon>Diptera</taxon>
        <taxon>Nematocera</taxon>
        <taxon>Culicoidea</taxon>
        <taxon>Culicidae</taxon>
        <taxon>Culicinae</taxon>
        <taxon>Aedini</taxon>
        <taxon>Aedes</taxon>
        <taxon>Stegomyia</taxon>
    </lineage>
</organism>
<feature type="chain" id="PRO_0000111485" description="Small ribosomal subunit protein uS9">
    <location>
        <begin position="1"/>
        <end position="148"/>
    </location>
</feature>
<reference key="1">
    <citation type="submission" date="2004-02" db="EMBL/GenBank/DDBJ databases">
        <title>Complementing the sialome of the adult female Aedes aegypti mosquito.</title>
        <authorList>
            <person name="Chandra P.K."/>
            <person name="Wikel S.K."/>
        </authorList>
    </citation>
    <scope>NUCLEOTIDE SEQUENCE [MRNA]</scope>
    <source>
        <tissue>Salivary gland</tissue>
    </source>
</reference>
<reference key="2">
    <citation type="journal article" date="2007" name="Science">
        <title>Genome sequence of Aedes aegypti, a major arbovirus vector.</title>
        <authorList>
            <person name="Nene V."/>
            <person name="Wortman J.R."/>
            <person name="Lawson D."/>
            <person name="Haas B.J."/>
            <person name="Kodira C.D."/>
            <person name="Tu Z.J."/>
            <person name="Loftus B.J."/>
            <person name="Xi Z."/>
            <person name="Megy K."/>
            <person name="Grabherr M."/>
            <person name="Ren Q."/>
            <person name="Zdobnov E.M."/>
            <person name="Lobo N.F."/>
            <person name="Campbell K.S."/>
            <person name="Brown S.E."/>
            <person name="Bonaldo M.F."/>
            <person name="Zhu J."/>
            <person name="Sinkins S.P."/>
            <person name="Hogenkamp D.G."/>
            <person name="Amedeo P."/>
            <person name="Arensburger P."/>
            <person name="Atkinson P.W."/>
            <person name="Bidwell S.L."/>
            <person name="Biedler J."/>
            <person name="Birney E."/>
            <person name="Bruggner R.V."/>
            <person name="Costas J."/>
            <person name="Coy M.R."/>
            <person name="Crabtree J."/>
            <person name="Crawford M."/>
            <person name="DeBruyn B."/>
            <person name="DeCaprio D."/>
            <person name="Eiglmeier K."/>
            <person name="Eisenstadt E."/>
            <person name="El-Dorry H."/>
            <person name="Gelbart W.M."/>
            <person name="Gomes S.L."/>
            <person name="Hammond M."/>
            <person name="Hannick L.I."/>
            <person name="Hogan J.R."/>
            <person name="Holmes M.H."/>
            <person name="Jaffe D."/>
            <person name="Johnston S.J."/>
            <person name="Kennedy R.C."/>
            <person name="Koo H."/>
            <person name="Kravitz S."/>
            <person name="Kriventseva E.V."/>
            <person name="Kulp D."/>
            <person name="Labutti K."/>
            <person name="Lee E."/>
            <person name="Li S."/>
            <person name="Lovin D.D."/>
            <person name="Mao C."/>
            <person name="Mauceli E."/>
            <person name="Menck C.F."/>
            <person name="Miller J.R."/>
            <person name="Montgomery P."/>
            <person name="Mori A."/>
            <person name="Nascimento A.L."/>
            <person name="Naveira H.F."/>
            <person name="Nusbaum C."/>
            <person name="O'Leary S.B."/>
            <person name="Orvis J."/>
            <person name="Pertea M."/>
            <person name="Quesneville H."/>
            <person name="Reidenbach K.R."/>
            <person name="Rogers Y.-H.C."/>
            <person name="Roth C.W."/>
            <person name="Schneider J.R."/>
            <person name="Schatz M."/>
            <person name="Shumway M."/>
            <person name="Stanke M."/>
            <person name="Stinson E.O."/>
            <person name="Tubio J.M.C."/>
            <person name="Vanzee J.P."/>
            <person name="Verjovski-Almeida S."/>
            <person name="Werner D."/>
            <person name="White O.R."/>
            <person name="Wyder S."/>
            <person name="Zeng Q."/>
            <person name="Zhao Q."/>
            <person name="Zhao Y."/>
            <person name="Hill C.A."/>
            <person name="Raikhel A.S."/>
            <person name="Soares M.B."/>
            <person name="Knudson D.L."/>
            <person name="Lee N.H."/>
            <person name="Galagan J."/>
            <person name="Salzberg S.L."/>
            <person name="Paulsen I.T."/>
            <person name="Dimopoulos G."/>
            <person name="Collins F.H."/>
            <person name="Bruce B."/>
            <person name="Fraser-Liggett C.M."/>
            <person name="Severson D.W."/>
        </authorList>
    </citation>
    <scope>NUCLEOTIDE SEQUENCE [LARGE SCALE GENOMIC DNA]</scope>
    <source>
        <strain>LVPib12</strain>
    </source>
</reference>
<name>RS16_AEDAE</name>
<gene>
    <name type="primary">RpS16</name>
    <name type="ORF">AAEL003427</name>
</gene>
<proteinExistence type="evidence at transcript level"/>
<accession>P62251</accession>
<accession>Q17FD2</accession>
<sequence>MVKARKEPVNAVQVFGRKKTATAVAYCKRGKGLLRVNGRPLDQIEPKVLQYKLQEPLLLLGKEKFAGVDIRIRVSGGGHVAQIYAIRQAISKALVSFYQKYVDEASRKELKDILTQYDRTLLVADPRRCEPKKFGGPGARARYQKSYR</sequence>
<comment type="similarity">
    <text evidence="1">Belongs to the universal ribosomal protein uS9 family.</text>
</comment>
<keyword id="KW-1185">Reference proteome</keyword>
<keyword id="KW-0687">Ribonucleoprotein</keyword>
<keyword id="KW-0689">Ribosomal protein</keyword>
<evidence type="ECO:0000305" key="1"/>